<protein>
    <recommendedName>
        <fullName>Flagellar biosynthetic protein FliQ</fullName>
    </recommendedName>
</protein>
<comment type="function">
    <text evidence="1">Role in flagellar biosynthesis.</text>
</comment>
<comment type="subcellular location">
    <subcellularLocation>
        <location evidence="3">Cell membrane</location>
        <topology evidence="3">Multi-pass membrane protein</topology>
    </subcellularLocation>
    <subcellularLocation>
        <location evidence="1">Bacterial flagellum basal body</location>
    </subcellularLocation>
</comment>
<comment type="similarity">
    <text evidence="3">Belongs to the FliQ/MopD/SpaQ family.</text>
</comment>
<evidence type="ECO:0000250" key="1"/>
<evidence type="ECO:0000255" key="2"/>
<evidence type="ECO:0000305" key="3"/>
<dbReference type="EMBL" id="AE016826">
    <property type="protein sequence ID" value="AAO26813.1"/>
    <property type="molecule type" value="Genomic_DNA"/>
</dbReference>
<dbReference type="RefSeq" id="WP_011091214.1">
    <property type="nucleotide sequence ID" value="NC_004545.1"/>
</dbReference>
<dbReference type="SMR" id="Q89AZ1"/>
<dbReference type="STRING" id="224915.bbp_077"/>
<dbReference type="KEGG" id="bab:bbp_077"/>
<dbReference type="eggNOG" id="COG1987">
    <property type="taxonomic scope" value="Bacteria"/>
</dbReference>
<dbReference type="HOGENOM" id="CLU_164516_2_0_6"/>
<dbReference type="OrthoDB" id="9806440at2"/>
<dbReference type="Proteomes" id="UP000000601">
    <property type="component" value="Chromosome"/>
</dbReference>
<dbReference type="GO" id="GO:0009425">
    <property type="term" value="C:bacterial-type flagellum basal body"/>
    <property type="evidence" value="ECO:0007669"/>
    <property type="project" value="UniProtKB-SubCell"/>
</dbReference>
<dbReference type="GO" id="GO:0005886">
    <property type="term" value="C:plasma membrane"/>
    <property type="evidence" value="ECO:0007669"/>
    <property type="project" value="UniProtKB-SubCell"/>
</dbReference>
<dbReference type="GO" id="GO:0044780">
    <property type="term" value="P:bacterial-type flagellum assembly"/>
    <property type="evidence" value="ECO:0007669"/>
    <property type="project" value="InterPro"/>
</dbReference>
<dbReference type="GO" id="GO:0009306">
    <property type="term" value="P:protein secretion"/>
    <property type="evidence" value="ECO:0007669"/>
    <property type="project" value="InterPro"/>
</dbReference>
<dbReference type="InterPro" id="IPR002191">
    <property type="entry name" value="Bac_export_3"/>
</dbReference>
<dbReference type="InterPro" id="IPR006305">
    <property type="entry name" value="FliQ"/>
</dbReference>
<dbReference type="NCBIfam" id="TIGR01402">
    <property type="entry name" value="fliQ"/>
    <property type="match status" value="1"/>
</dbReference>
<dbReference type="PANTHER" id="PTHR34040">
    <property type="entry name" value="FLAGELLAR BIOSYNTHETIC PROTEIN FLIQ"/>
    <property type="match status" value="1"/>
</dbReference>
<dbReference type="PANTHER" id="PTHR34040:SF2">
    <property type="entry name" value="FLAGELLAR BIOSYNTHETIC PROTEIN FLIQ"/>
    <property type="match status" value="1"/>
</dbReference>
<dbReference type="Pfam" id="PF01313">
    <property type="entry name" value="Bac_export_3"/>
    <property type="match status" value="1"/>
</dbReference>
<dbReference type="PIRSF" id="PIRSF004669">
    <property type="entry name" value="FliQ"/>
    <property type="match status" value="1"/>
</dbReference>
<dbReference type="PRINTS" id="PR00952">
    <property type="entry name" value="TYPE3IMQPROT"/>
</dbReference>
<accession>Q89AZ1</accession>
<reference key="1">
    <citation type="journal article" date="2003" name="Proc. Natl. Acad. Sci. U.S.A.">
        <title>Reductive genome evolution in Buchnera aphidicola.</title>
        <authorList>
            <person name="van Ham R.C.H.J."/>
            <person name="Kamerbeek J."/>
            <person name="Palacios C."/>
            <person name="Rausell C."/>
            <person name="Abascal F."/>
            <person name="Bastolla U."/>
            <person name="Fernandez J.M."/>
            <person name="Jimenez L."/>
            <person name="Postigo M."/>
            <person name="Silva F.J."/>
            <person name="Tamames J."/>
            <person name="Viguera E."/>
            <person name="Latorre A."/>
            <person name="Valencia A."/>
            <person name="Moran F."/>
            <person name="Moya A."/>
        </authorList>
    </citation>
    <scope>NUCLEOTIDE SEQUENCE [LARGE SCALE GENOMIC DNA]</scope>
    <source>
        <strain>Bp</strain>
    </source>
</reference>
<sequence length="90" mass="10046">MTIESVMSLFYDAMKVTLMISLPLLLSALCCGLIVSIFQAATQINEQTLSFIPKIAAVLVSIVIFGPWMLVILSDYTHTLFYNLSYITYS</sequence>
<gene>
    <name type="primary">fliQ</name>
    <name type="ordered locus">bbp_077</name>
</gene>
<feature type="chain" id="PRO_0000129091" description="Flagellar biosynthetic protein FliQ">
    <location>
        <begin position="1"/>
        <end position="90"/>
    </location>
</feature>
<feature type="transmembrane region" description="Helical" evidence="2">
    <location>
        <begin position="18"/>
        <end position="38"/>
    </location>
</feature>
<feature type="transmembrane region" description="Helical" evidence="2">
    <location>
        <begin position="52"/>
        <end position="72"/>
    </location>
</feature>
<organism>
    <name type="scientific">Buchnera aphidicola subsp. Baizongia pistaciae (strain Bp)</name>
    <dbReference type="NCBI Taxonomy" id="224915"/>
    <lineage>
        <taxon>Bacteria</taxon>
        <taxon>Pseudomonadati</taxon>
        <taxon>Pseudomonadota</taxon>
        <taxon>Gammaproteobacteria</taxon>
        <taxon>Enterobacterales</taxon>
        <taxon>Erwiniaceae</taxon>
        <taxon>Buchnera</taxon>
    </lineage>
</organism>
<proteinExistence type="inferred from homology"/>
<name>FLIQ_BUCBP</name>
<keyword id="KW-0975">Bacterial flagellum</keyword>
<keyword id="KW-1003">Cell membrane</keyword>
<keyword id="KW-0472">Membrane</keyword>
<keyword id="KW-1185">Reference proteome</keyword>
<keyword id="KW-0812">Transmembrane</keyword>
<keyword id="KW-1133">Transmembrane helix</keyword>